<reference key="1">
    <citation type="journal article" date="1993" name="Mol. Microbiol.">
        <title>Sequence and analysis of the genetic locus responsible for surfactin synthesis in Bacillus subtilis.</title>
        <authorList>
            <person name="Cosmina P."/>
            <person name="Rodriguez F."/>
            <person name="de Ferra F."/>
            <person name="Grandi G."/>
            <person name="Perego M."/>
            <person name="Venema G."/>
            <person name="van Sinderen D."/>
        </authorList>
    </citation>
    <scope>NUCLEOTIDE SEQUENCE [GENOMIC DNA]</scope>
    <source>
        <strain>168 / JH642</strain>
    </source>
</reference>
<reference key="2">
    <citation type="journal article" date="1996" name="Microbiology">
        <title>The 25 degrees-36 degrees region of the Bacillus subtilis chromosome: determination of the sequence of a 146 kb segment and identification of 113 genes.</title>
        <authorList>
            <person name="Yamane K."/>
            <person name="Kumano M."/>
            <person name="Kurita K."/>
        </authorList>
    </citation>
    <scope>NUCLEOTIDE SEQUENCE [GENOMIC DNA]</scope>
    <source>
        <strain>168</strain>
    </source>
</reference>
<reference key="3">
    <citation type="journal article" date="1997" name="Nature">
        <title>The complete genome sequence of the Gram-positive bacterium Bacillus subtilis.</title>
        <authorList>
            <person name="Kunst F."/>
            <person name="Ogasawara N."/>
            <person name="Moszer I."/>
            <person name="Albertini A.M."/>
            <person name="Alloni G."/>
            <person name="Azevedo V."/>
            <person name="Bertero M.G."/>
            <person name="Bessieres P."/>
            <person name="Bolotin A."/>
            <person name="Borchert S."/>
            <person name="Borriss R."/>
            <person name="Boursier L."/>
            <person name="Brans A."/>
            <person name="Braun M."/>
            <person name="Brignell S.C."/>
            <person name="Bron S."/>
            <person name="Brouillet S."/>
            <person name="Bruschi C.V."/>
            <person name="Caldwell B."/>
            <person name="Capuano V."/>
            <person name="Carter N.M."/>
            <person name="Choi S.-K."/>
            <person name="Codani J.-J."/>
            <person name="Connerton I.F."/>
            <person name="Cummings N.J."/>
            <person name="Daniel R.A."/>
            <person name="Denizot F."/>
            <person name="Devine K.M."/>
            <person name="Duesterhoeft A."/>
            <person name="Ehrlich S.D."/>
            <person name="Emmerson P.T."/>
            <person name="Entian K.-D."/>
            <person name="Errington J."/>
            <person name="Fabret C."/>
            <person name="Ferrari E."/>
            <person name="Foulger D."/>
            <person name="Fritz C."/>
            <person name="Fujita M."/>
            <person name="Fujita Y."/>
            <person name="Fuma S."/>
            <person name="Galizzi A."/>
            <person name="Galleron N."/>
            <person name="Ghim S.-Y."/>
            <person name="Glaser P."/>
            <person name="Goffeau A."/>
            <person name="Golightly E.J."/>
            <person name="Grandi G."/>
            <person name="Guiseppi G."/>
            <person name="Guy B.J."/>
            <person name="Haga K."/>
            <person name="Haiech J."/>
            <person name="Harwood C.R."/>
            <person name="Henaut A."/>
            <person name="Hilbert H."/>
            <person name="Holsappel S."/>
            <person name="Hosono S."/>
            <person name="Hullo M.-F."/>
            <person name="Itaya M."/>
            <person name="Jones L.-M."/>
            <person name="Joris B."/>
            <person name="Karamata D."/>
            <person name="Kasahara Y."/>
            <person name="Klaerr-Blanchard M."/>
            <person name="Klein C."/>
            <person name="Kobayashi Y."/>
            <person name="Koetter P."/>
            <person name="Koningstein G."/>
            <person name="Krogh S."/>
            <person name="Kumano M."/>
            <person name="Kurita K."/>
            <person name="Lapidus A."/>
            <person name="Lardinois S."/>
            <person name="Lauber J."/>
            <person name="Lazarevic V."/>
            <person name="Lee S.-M."/>
            <person name="Levine A."/>
            <person name="Liu H."/>
            <person name="Masuda S."/>
            <person name="Mauel C."/>
            <person name="Medigue C."/>
            <person name="Medina N."/>
            <person name="Mellado R.P."/>
            <person name="Mizuno M."/>
            <person name="Moestl D."/>
            <person name="Nakai S."/>
            <person name="Noback M."/>
            <person name="Noone D."/>
            <person name="O'Reilly M."/>
            <person name="Ogawa K."/>
            <person name="Ogiwara A."/>
            <person name="Oudega B."/>
            <person name="Park S.-H."/>
            <person name="Parro V."/>
            <person name="Pohl T.M."/>
            <person name="Portetelle D."/>
            <person name="Porwollik S."/>
            <person name="Prescott A.M."/>
            <person name="Presecan E."/>
            <person name="Pujic P."/>
            <person name="Purnelle B."/>
            <person name="Rapoport G."/>
            <person name="Rey M."/>
            <person name="Reynolds S."/>
            <person name="Rieger M."/>
            <person name="Rivolta C."/>
            <person name="Rocha E."/>
            <person name="Roche B."/>
            <person name="Rose M."/>
            <person name="Sadaie Y."/>
            <person name="Sato T."/>
            <person name="Scanlan E."/>
            <person name="Schleich S."/>
            <person name="Schroeter R."/>
            <person name="Scoffone F."/>
            <person name="Sekiguchi J."/>
            <person name="Sekowska A."/>
            <person name="Seror S.J."/>
            <person name="Serror P."/>
            <person name="Shin B.-S."/>
            <person name="Soldo B."/>
            <person name="Sorokin A."/>
            <person name="Tacconi E."/>
            <person name="Takagi T."/>
            <person name="Takahashi H."/>
            <person name="Takemaru K."/>
            <person name="Takeuchi M."/>
            <person name="Tamakoshi A."/>
            <person name="Tanaka T."/>
            <person name="Terpstra P."/>
            <person name="Tognoni A."/>
            <person name="Tosato V."/>
            <person name="Uchiyama S."/>
            <person name="Vandenbol M."/>
            <person name="Vannier F."/>
            <person name="Vassarotti A."/>
            <person name="Viari A."/>
            <person name="Wambutt R."/>
            <person name="Wedler E."/>
            <person name="Wedler H."/>
            <person name="Weitzenegger T."/>
            <person name="Winters P."/>
            <person name="Wipat A."/>
            <person name="Yamamoto H."/>
            <person name="Yamane K."/>
            <person name="Yasumoto K."/>
            <person name="Yata K."/>
            <person name="Yoshida K."/>
            <person name="Yoshikawa H.-F."/>
            <person name="Zumstein E."/>
            <person name="Yoshikawa H."/>
            <person name="Danchin A."/>
        </authorList>
    </citation>
    <scope>NUCLEOTIDE SEQUENCE [LARGE SCALE GENOMIC DNA]</scope>
    <source>
        <strain>168</strain>
    </source>
</reference>
<reference key="4">
    <citation type="journal article" date="2009" name="Microbiology">
        <title>From a consortium sequence to a unified sequence: the Bacillus subtilis 168 reference genome a decade later.</title>
        <authorList>
            <person name="Barbe V."/>
            <person name="Cruveiller S."/>
            <person name="Kunst F."/>
            <person name="Lenoble P."/>
            <person name="Meurice G."/>
            <person name="Sekowska A."/>
            <person name="Vallenet D."/>
            <person name="Wang T."/>
            <person name="Moszer I."/>
            <person name="Medigue C."/>
            <person name="Danchin A."/>
        </authorList>
    </citation>
    <scope>SEQUENCE REVISION TO 26; 33 AND 1010-1015</scope>
</reference>
<reference key="5">
    <citation type="journal article" date="2007" name="Mol. Cell. Proteomics">
        <title>The serine/threonine/tyrosine phosphoproteome of the model bacterium Bacillus subtilis.</title>
        <authorList>
            <person name="Macek B."/>
            <person name="Mijakovic I."/>
            <person name="Olsen J.V."/>
            <person name="Gnad F."/>
            <person name="Kumar C."/>
            <person name="Jensen P.R."/>
            <person name="Mann M."/>
        </authorList>
    </citation>
    <scope>PHOSPHOPANTETHEINYLATION [LARGE SCALE ANALYSIS] AT SER-1003</scope>
    <scope>IDENTIFICATION BY MASS SPECTROMETRY</scope>
    <source>
        <strain>168</strain>
    </source>
</reference>
<reference key="6">
    <citation type="journal article" date="2002" name="Structure">
        <title>Structural basis for the cyclization of the lipopeptide antibiotic surfactin by the thioesterase domain SrfTE.</title>
        <authorList>
            <person name="Bruner S.D."/>
            <person name="Weber T."/>
            <person name="Kohli R.M."/>
            <person name="Schwarzer D."/>
            <person name="Marahiel M.A."/>
            <person name="Walsh C.T."/>
            <person name="Stubbs M.T."/>
        </authorList>
    </citation>
    <scope>X-RAY CRYSTALLOGRAPHY (1.71 ANGSTROMS) OF 1042-1271</scope>
</reference>
<dbReference type="EMBL" id="X70356">
    <property type="protein sequence ID" value="CAA49818.1"/>
    <property type="molecule type" value="Genomic_DNA"/>
</dbReference>
<dbReference type="EMBL" id="D50453">
    <property type="protein sequence ID" value="BAA08985.1"/>
    <property type="molecule type" value="Genomic_DNA"/>
</dbReference>
<dbReference type="EMBL" id="AL009126">
    <property type="protein sequence ID" value="CAB12145.2"/>
    <property type="molecule type" value="Genomic_DNA"/>
</dbReference>
<dbReference type="PIR" id="I40487">
    <property type="entry name" value="I40487"/>
</dbReference>
<dbReference type="RefSeq" id="NP_388233.2">
    <property type="nucleotide sequence ID" value="NC_000964.3"/>
</dbReference>
<dbReference type="RefSeq" id="WP_003234570.1">
    <property type="nucleotide sequence ID" value="NZ_OZ025638.1"/>
</dbReference>
<dbReference type="PDB" id="1JMK">
    <property type="method" value="X-ray"/>
    <property type="resolution" value="1.71 A"/>
    <property type="chains" value="C/O=1042-1271"/>
</dbReference>
<dbReference type="PDB" id="2VSQ">
    <property type="method" value="X-ray"/>
    <property type="resolution" value="2.60 A"/>
    <property type="chains" value="A=1-1275"/>
</dbReference>
<dbReference type="PDB" id="8F7F">
    <property type="method" value="X-ray"/>
    <property type="resolution" value="1.62 A"/>
    <property type="chains" value="A=7-441"/>
</dbReference>
<dbReference type="PDB" id="8F7G">
    <property type="method" value="X-ray"/>
    <property type="resolution" value="2.40 A"/>
    <property type="chains" value="A=7-441"/>
</dbReference>
<dbReference type="PDB" id="8F7H">
    <property type="method" value="X-ray"/>
    <property type="resolution" value="1.93 A"/>
    <property type="chains" value="A=7-441"/>
</dbReference>
<dbReference type="PDB" id="8F7I">
    <property type="method" value="X-ray"/>
    <property type="resolution" value="1.58 A"/>
    <property type="chains" value="A=7-441"/>
</dbReference>
<dbReference type="PDBsum" id="1JMK"/>
<dbReference type="PDBsum" id="2VSQ"/>
<dbReference type="PDBsum" id="8F7F"/>
<dbReference type="PDBsum" id="8F7G"/>
<dbReference type="PDBsum" id="8F7H"/>
<dbReference type="PDBsum" id="8F7I"/>
<dbReference type="SMR" id="Q08787"/>
<dbReference type="FunCoup" id="Q08787">
    <property type="interactions" value="72"/>
</dbReference>
<dbReference type="IntAct" id="Q08787">
    <property type="interactions" value="2"/>
</dbReference>
<dbReference type="MINT" id="Q08787"/>
<dbReference type="STRING" id="224308.BSU03510"/>
<dbReference type="ESTHER" id="bacsu-srfac">
    <property type="family name" value="Thioesterase"/>
</dbReference>
<dbReference type="jPOST" id="Q08787"/>
<dbReference type="PaxDb" id="224308-BSU03510"/>
<dbReference type="EnsemblBacteria" id="CAB12145">
    <property type="protein sequence ID" value="CAB12145"/>
    <property type="gene ID" value="BSU_03510"/>
</dbReference>
<dbReference type="GeneID" id="938308"/>
<dbReference type="KEGG" id="bsu:BSU03510"/>
<dbReference type="PATRIC" id="fig|224308.179.peg.368"/>
<dbReference type="eggNOG" id="COG1020">
    <property type="taxonomic scope" value="Bacteria"/>
</dbReference>
<dbReference type="InParanoid" id="Q08787"/>
<dbReference type="OrthoDB" id="9765680at2"/>
<dbReference type="PhylomeDB" id="Q08787"/>
<dbReference type="BioCyc" id="BSUB:BSU03510-MONOMER"/>
<dbReference type="SABIO-RK" id="Q08787"/>
<dbReference type="UniPathway" id="UPA00181"/>
<dbReference type="EvolutionaryTrace" id="Q08787"/>
<dbReference type="Proteomes" id="UP000001570">
    <property type="component" value="Chromosome"/>
</dbReference>
<dbReference type="GO" id="GO:0005737">
    <property type="term" value="C:cytoplasm"/>
    <property type="evidence" value="ECO:0000318"/>
    <property type="project" value="GO_Central"/>
</dbReference>
<dbReference type="GO" id="GO:0005829">
    <property type="term" value="C:cytosol"/>
    <property type="evidence" value="ECO:0000318"/>
    <property type="project" value="GO_Central"/>
</dbReference>
<dbReference type="GO" id="GO:0016874">
    <property type="term" value="F:ligase activity"/>
    <property type="evidence" value="ECO:0007669"/>
    <property type="project" value="UniProtKB-KW"/>
</dbReference>
<dbReference type="GO" id="GO:0031177">
    <property type="term" value="F:phosphopantetheine binding"/>
    <property type="evidence" value="ECO:0000318"/>
    <property type="project" value="GO_Central"/>
</dbReference>
<dbReference type="GO" id="GO:0043041">
    <property type="term" value="P:amino acid activation for nonribosomal peptide biosynthetic process"/>
    <property type="evidence" value="ECO:0000318"/>
    <property type="project" value="GO_Central"/>
</dbReference>
<dbReference type="GO" id="GO:0017000">
    <property type="term" value="P:antibiotic biosynthetic process"/>
    <property type="evidence" value="ECO:0007669"/>
    <property type="project" value="UniProtKB-KW"/>
</dbReference>
<dbReference type="GO" id="GO:0008610">
    <property type="term" value="P:lipid biosynthetic process"/>
    <property type="evidence" value="ECO:0007669"/>
    <property type="project" value="UniProtKB-ARBA"/>
</dbReference>
<dbReference type="GO" id="GO:0044550">
    <property type="term" value="P:secondary metabolite biosynthetic process"/>
    <property type="evidence" value="ECO:0000318"/>
    <property type="project" value="GO_Central"/>
</dbReference>
<dbReference type="GO" id="GO:0030435">
    <property type="term" value="P:sporulation resulting in formation of a cellular spore"/>
    <property type="evidence" value="ECO:0007669"/>
    <property type="project" value="UniProtKB-KW"/>
</dbReference>
<dbReference type="CDD" id="cd12117">
    <property type="entry name" value="A_NRPS_Srf_like"/>
    <property type="match status" value="1"/>
</dbReference>
<dbReference type="CDD" id="cd19543">
    <property type="entry name" value="DCL_NRPS"/>
    <property type="match status" value="1"/>
</dbReference>
<dbReference type="FunFam" id="3.40.50.980:FF:000002">
    <property type="entry name" value="Enterobactin synthetase component F"/>
    <property type="match status" value="1"/>
</dbReference>
<dbReference type="FunFam" id="3.30.559.10:FF:000012">
    <property type="entry name" value="Non-ribosomal peptide synthetase"/>
    <property type="match status" value="1"/>
</dbReference>
<dbReference type="FunFam" id="3.40.50.12780:FF:000012">
    <property type="entry name" value="Non-ribosomal peptide synthetase"/>
    <property type="match status" value="1"/>
</dbReference>
<dbReference type="FunFam" id="3.40.50.980:FF:000001">
    <property type="entry name" value="Non-ribosomal peptide synthetase"/>
    <property type="match status" value="1"/>
</dbReference>
<dbReference type="FunFam" id="2.30.38.10:FF:000001">
    <property type="entry name" value="Non-ribosomal peptide synthetase PvdI"/>
    <property type="match status" value="1"/>
</dbReference>
<dbReference type="FunFam" id="1.10.1200.10:FF:000005">
    <property type="entry name" value="Nonribosomal peptide synthetase 1"/>
    <property type="match status" value="1"/>
</dbReference>
<dbReference type="FunFam" id="3.30.300.30:FF:000073">
    <property type="entry name" value="Surfactin synthase subunit 3"/>
    <property type="match status" value="1"/>
</dbReference>
<dbReference type="Gene3D" id="3.30.300.30">
    <property type="match status" value="1"/>
</dbReference>
<dbReference type="Gene3D" id="3.40.50.980">
    <property type="match status" value="2"/>
</dbReference>
<dbReference type="Gene3D" id="1.10.1200.10">
    <property type="entry name" value="ACP-like"/>
    <property type="match status" value="1"/>
</dbReference>
<dbReference type="Gene3D" id="3.40.50.1820">
    <property type="entry name" value="alpha/beta hydrolase"/>
    <property type="match status" value="1"/>
</dbReference>
<dbReference type="Gene3D" id="3.30.559.10">
    <property type="entry name" value="Chloramphenicol acetyltransferase-like domain"/>
    <property type="match status" value="1"/>
</dbReference>
<dbReference type="Gene3D" id="1.10.287.490">
    <property type="entry name" value="Helix hairpin bin"/>
    <property type="match status" value="1"/>
</dbReference>
<dbReference type="Gene3D" id="2.30.38.10">
    <property type="entry name" value="Luciferase, Domain 3"/>
    <property type="match status" value="1"/>
</dbReference>
<dbReference type="Gene3D" id="3.30.559.30">
    <property type="entry name" value="Nonribosomal peptide synthetase, condensation domain"/>
    <property type="match status" value="1"/>
</dbReference>
<dbReference type="InterPro" id="IPR010071">
    <property type="entry name" value="AA_adenyl_dom"/>
</dbReference>
<dbReference type="InterPro" id="IPR029058">
    <property type="entry name" value="AB_hydrolase_fold"/>
</dbReference>
<dbReference type="InterPro" id="IPR036736">
    <property type="entry name" value="ACP-like_sf"/>
</dbReference>
<dbReference type="InterPro" id="IPR025110">
    <property type="entry name" value="AMP-bd_C"/>
</dbReference>
<dbReference type="InterPro" id="IPR045851">
    <property type="entry name" value="AMP-bd_C_sf"/>
</dbReference>
<dbReference type="InterPro" id="IPR020845">
    <property type="entry name" value="AMP-binding_CS"/>
</dbReference>
<dbReference type="InterPro" id="IPR000873">
    <property type="entry name" value="AMP-dep_synth/lig_dom"/>
</dbReference>
<dbReference type="InterPro" id="IPR023213">
    <property type="entry name" value="CAT-like_dom_sf"/>
</dbReference>
<dbReference type="InterPro" id="IPR001242">
    <property type="entry name" value="Condensatn"/>
</dbReference>
<dbReference type="InterPro" id="IPR020806">
    <property type="entry name" value="PKS_PP-bd"/>
</dbReference>
<dbReference type="InterPro" id="IPR009081">
    <property type="entry name" value="PP-bd_ACP"/>
</dbReference>
<dbReference type="InterPro" id="IPR006162">
    <property type="entry name" value="Ppantetheine_attach_site"/>
</dbReference>
<dbReference type="InterPro" id="IPR001031">
    <property type="entry name" value="Thioesterase"/>
</dbReference>
<dbReference type="NCBIfam" id="TIGR01733">
    <property type="entry name" value="AA-adenyl-dom"/>
    <property type="match status" value="1"/>
</dbReference>
<dbReference type="PANTHER" id="PTHR45527:SF1">
    <property type="entry name" value="FATTY ACID SYNTHASE"/>
    <property type="match status" value="1"/>
</dbReference>
<dbReference type="PANTHER" id="PTHR45527">
    <property type="entry name" value="NONRIBOSOMAL PEPTIDE SYNTHETASE"/>
    <property type="match status" value="1"/>
</dbReference>
<dbReference type="Pfam" id="PF00501">
    <property type="entry name" value="AMP-binding"/>
    <property type="match status" value="1"/>
</dbReference>
<dbReference type="Pfam" id="PF13193">
    <property type="entry name" value="AMP-binding_C"/>
    <property type="match status" value="1"/>
</dbReference>
<dbReference type="Pfam" id="PF00668">
    <property type="entry name" value="Condensation"/>
    <property type="match status" value="1"/>
</dbReference>
<dbReference type="Pfam" id="PF00550">
    <property type="entry name" value="PP-binding"/>
    <property type="match status" value="1"/>
</dbReference>
<dbReference type="Pfam" id="PF00975">
    <property type="entry name" value="Thioesterase"/>
    <property type="match status" value="1"/>
</dbReference>
<dbReference type="SMART" id="SM00823">
    <property type="entry name" value="PKS_PP"/>
    <property type="match status" value="1"/>
</dbReference>
<dbReference type="SUPFAM" id="SSF56801">
    <property type="entry name" value="Acetyl-CoA synthetase-like"/>
    <property type="match status" value="1"/>
</dbReference>
<dbReference type="SUPFAM" id="SSF47336">
    <property type="entry name" value="ACP-like"/>
    <property type="match status" value="1"/>
</dbReference>
<dbReference type="SUPFAM" id="SSF53474">
    <property type="entry name" value="alpha/beta-Hydrolases"/>
    <property type="match status" value="1"/>
</dbReference>
<dbReference type="SUPFAM" id="SSF52777">
    <property type="entry name" value="CoA-dependent acyltransferases"/>
    <property type="match status" value="2"/>
</dbReference>
<dbReference type="PROSITE" id="PS00455">
    <property type="entry name" value="AMP_BINDING"/>
    <property type="match status" value="1"/>
</dbReference>
<dbReference type="PROSITE" id="PS50075">
    <property type="entry name" value="CARRIER"/>
    <property type="match status" value="1"/>
</dbReference>
<dbReference type="PROSITE" id="PS00012">
    <property type="entry name" value="PHOSPHOPANTETHEINE"/>
    <property type="match status" value="1"/>
</dbReference>
<feature type="chain" id="PRO_0000193101" description="Surfactin synthase subunit 3">
    <location>
        <begin position="1"/>
        <end position="1275"/>
    </location>
</feature>
<feature type="domain" description="Carrier" evidence="1">
    <location>
        <begin position="968"/>
        <end position="1043"/>
    </location>
</feature>
<feature type="region of interest" description="Thioesterase">
    <location>
        <begin position="1059"/>
        <end position="1271"/>
    </location>
</feature>
<feature type="active site">
    <location>
        <position position="1120"/>
    </location>
</feature>
<feature type="active site">
    <location>
        <position position="1147"/>
    </location>
</feature>
<feature type="active site">
    <location>
        <position position="1247"/>
    </location>
</feature>
<feature type="modified residue" description="O-(pantetheine 4'-phosphoryl)serine" evidence="1 2">
    <location>
        <position position="1003"/>
    </location>
</feature>
<feature type="sequence conflict" description="In Ref. 1; CAA49818 and 2; BAA08985." evidence="3" ref="1 2">
    <original>A</original>
    <variation>P</variation>
    <location>
        <position position="26"/>
    </location>
</feature>
<feature type="sequence conflict" description="In Ref. 1; CAA49818 and 2; BAA08985." evidence="3" ref="1 2">
    <original>S</original>
    <variation>T</variation>
    <location>
        <position position="33"/>
    </location>
</feature>
<feature type="sequence conflict" description="In Ref. 1; CAA49818 and 2; BAA08985." evidence="3" ref="1 2">
    <original>ASRIKK</original>
    <variation>VPHQQ</variation>
    <location>
        <begin position="1010"/>
        <end position="1015"/>
    </location>
</feature>
<feature type="helix" evidence="5">
    <location>
        <begin position="6"/>
        <end position="8"/>
    </location>
</feature>
<feature type="strand" evidence="6">
    <location>
        <begin position="9"/>
        <end position="14"/>
    </location>
</feature>
<feature type="helix" evidence="6">
    <location>
        <begin position="17"/>
        <end position="28"/>
    </location>
</feature>
<feature type="strand" evidence="6">
    <location>
        <begin position="36"/>
        <end position="45"/>
    </location>
</feature>
<feature type="helix" evidence="6">
    <location>
        <begin position="49"/>
        <end position="62"/>
    </location>
</feature>
<feature type="helix" evidence="6">
    <location>
        <begin position="64"/>
        <end position="67"/>
    </location>
</feature>
<feature type="strand" evidence="6">
    <location>
        <begin position="68"/>
        <end position="71"/>
    </location>
</feature>
<feature type="strand" evidence="6">
    <location>
        <begin position="75"/>
        <end position="77"/>
    </location>
</feature>
<feature type="strand" evidence="6">
    <location>
        <begin position="79"/>
        <end position="84"/>
    </location>
</feature>
<feature type="strand" evidence="6">
    <location>
        <begin position="91"/>
        <end position="94"/>
    </location>
</feature>
<feature type="helix" evidence="6">
    <location>
        <begin position="100"/>
        <end position="117"/>
    </location>
</feature>
<feature type="turn" evidence="6">
    <location>
        <begin position="121"/>
        <end position="123"/>
    </location>
</feature>
<feature type="strand" evidence="6">
    <location>
        <begin position="126"/>
        <end position="135"/>
    </location>
</feature>
<feature type="strand" evidence="6">
    <location>
        <begin position="138"/>
        <end position="146"/>
    </location>
</feature>
<feature type="turn" evidence="6">
    <location>
        <begin position="147"/>
        <end position="149"/>
    </location>
</feature>
<feature type="turn" evidence="6">
    <location>
        <begin position="152"/>
        <end position="154"/>
    </location>
</feature>
<feature type="helix" evidence="6">
    <location>
        <begin position="155"/>
        <end position="171"/>
    </location>
</feature>
<feature type="helix" evidence="6">
    <location>
        <begin position="184"/>
        <end position="191"/>
    </location>
</feature>
<feature type="helix" evidence="6">
    <location>
        <begin position="195"/>
        <end position="205"/>
    </location>
</feature>
<feature type="turn" evidence="6">
    <location>
        <begin position="206"/>
        <end position="208"/>
    </location>
</feature>
<feature type="helix" evidence="6">
    <location>
        <begin position="216"/>
        <end position="218"/>
    </location>
</feature>
<feature type="strand" evidence="6">
    <location>
        <begin position="228"/>
        <end position="234"/>
    </location>
</feature>
<feature type="helix" evidence="6">
    <location>
        <begin position="237"/>
        <end position="249"/>
    </location>
</feature>
<feature type="helix" evidence="6">
    <location>
        <begin position="254"/>
        <end position="270"/>
    </location>
</feature>
<feature type="strand" evidence="6">
    <location>
        <begin position="273"/>
        <end position="281"/>
    </location>
</feature>
<feature type="helix" evidence="6">
    <location>
        <begin position="291"/>
        <end position="293"/>
    </location>
</feature>
<feature type="strand" evidence="6">
    <location>
        <begin position="300"/>
        <end position="307"/>
    </location>
</feature>
<feature type="helix" evidence="6">
    <location>
        <begin position="314"/>
        <end position="328"/>
    </location>
</feature>
<feature type="helix" evidence="6">
    <location>
        <begin position="329"/>
        <end position="331"/>
    </location>
</feature>
<feature type="helix" evidence="6">
    <location>
        <begin position="336"/>
        <end position="341"/>
    </location>
</feature>
<feature type="turn" evidence="6">
    <location>
        <begin position="342"/>
        <end position="344"/>
    </location>
</feature>
<feature type="strand" evidence="5">
    <location>
        <begin position="346"/>
        <end position="348"/>
    </location>
</feature>
<feature type="strand" evidence="6">
    <location>
        <begin position="352"/>
        <end position="355"/>
    </location>
</feature>
<feature type="helix" evidence="5">
    <location>
        <begin position="360"/>
        <end position="363"/>
    </location>
</feature>
<feature type="helix" evidence="5">
    <location>
        <begin position="368"/>
        <end position="371"/>
    </location>
</feature>
<feature type="strand" evidence="6">
    <location>
        <begin position="372"/>
        <end position="382"/>
    </location>
</feature>
<feature type="strand" evidence="6">
    <location>
        <begin position="386"/>
        <end position="393"/>
    </location>
</feature>
<feature type="strand" evidence="6">
    <location>
        <begin position="395"/>
        <end position="397"/>
    </location>
</feature>
<feature type="strand" evidence="6">
    <location>
        <begin position="399"/>
        <end position="405"/>
    </location>
</feature>
<feature type="turn" evidence="6">
    <location>
        <begin position="406"/>
        <end position="408"/>
    </location>
</feature>
<feature type="helix" evidence="6">
    <location>
        <begin position="411"/>
        <end position="430"/>
    </location>
</feature>
<feature type="helix" evidence="6">
    <location>
        <begin position="436"/>
        <end position="438"/>
    </location>
</feature>
<feature type="helix" evidence="5">
    <location>
        <begin position="444"/>
        <end position="451"/>
    </location>
</feature>
<feature type="turn" evidence="5">
    <location>
        <begin position="452"/>
        <end position="454"/>
    </location>
</feature>
<feature type="helix" evidence="5">
    <location>
        <begin position="466"/>
        <end position="476"/>
    </location>
</feature>
<feature type="strand" evidence="5">
    <location>
        <begin position="480"/>
        <end position="487"/>
    </location>
</feature>
<feature type="strand" evidence="5">
    <location>
        <begin position="489"/>
        <end position="491"/>
    </location>
</feature>
<feature type="helix" evidence="5">
    <location>
        <begin position="492"/>
        <end position="508"/>
    </location>
</feature>
<feature type="strand" evidence="5">
    <location>
        <begin position="516"/>
        <end position="519"/>
    </location>
</feature>
<feature type="helix" evidence="5">
    <location>
        <begin position="525"/>
        <end position="536"/>
    </location>
</feature>
<feature type="strand" evidence="5">
    <location>
        <begin position="540"/>
        <end position="543"/>
    </location>
</feature>
<feature type="helix" evidence="5">
    <location>
        <begin position="550"/>
        <end position="560"/>
    </location>
</feature>
<feature type="strand" evidence="5">
    <location>
        <begin position="564"/>
        <end position="567"/>
    </location>
</feature>
<feature type="strand" evidence="5">
    <location>
        <begin position="582"/>
        <end position="588"/>
    </location>
</feature>
<feature type="helix" evidence="5">
    <location>
        <begin position="590"/>
        <end position="594"/>
    </location>
</feature>
<feature type="strand" evidence="5">
    <location>
        <begin position="608"/>
        <end position="615"/>
    </location>
</feature>
<feature type="strand" evidence="5">
    <location>
        <begin position="618"/>
        <end position="621"/>
    </location>
</feature>
<feature type="strand" evidence="5">
    <location>
        <begin position="623"/>
        <end position="628"/>
    </location>
</feature>
<feature type="helix" evidence="5">
    <location>
        <begin position="629"/>
        <end position="636"/>
    </location>
</feature>
<feature type="strand" evidence="5">
    <location>
        <begin position="649"/>
        <end position="652"/>
    </location>
</feature>
<feature type="helix" evidence="5">
    <location>
        <begin position="660"/>
        <end position="669"/>
    </location>
</feature>
<feature type="turn" evidence="5">
    <location>
        <begin position="670"/>
        <end position="672"/>
    </location>
</feature>
<feature type="strand" evidence="5">
    <location>
        <begin position="674"/>
        <end position="677"/>
    </location>
</feature>
<feature type="helix" evidence="5">
    <location>
        <begin position="680"/>
        <end position="682"/>
    </location>
</feature>
<feature type="helix" evidence="5">
    <location>
        <begin position="686"/>
        <end position="696"/>
    </location>
</feature>
<feature type="strand" evidence="5">
    <location>
        <begin position="700"/>
        <end position="704"/>
    </location>
</feature>
<feature type="helix" evidence="5">
    <location>
        <begin position="705"/>
        <end position="714"/>
    </location>
</feature>
<feature type="helix" evidence="5">
    <location>
        <begin position="717"/>
        <end position="720"/>
    </location>
</feature>
<feature type="strand" evidence="5">
    <location>
        <begin position="723"/>
        <end position="730"/>
    </location>
</feature>
<feature type="helix" evidence="5">
    <location>
        <begin position="734"/>
        <end position="744"/>
    </location>
</feature>
<feature type="strand" evidence="5">
    <location>
        <begin position="749"/>
        <end position="753"/>
    </location>
</feature>
<feature type="helix" evidence="5">
    <location>
        <begin position="756"/>
        <end position="758"/>
    </location>
</feature>
<feature type="strand" evidence="5">
    <location>
        <begin position="762"/>
        <end position="766"/>
    </location>
</feature>
<feature type="strand" evidence="5">
    <location>
        <begin position="780"/>
        <end position="782"/>
    </location>
</feature>
<feature type="strand" evidence="5">
    <location>
        <begin position="786"/>
        <end position="791"/>
    </location>
</feature>
<feature type="strand" evidence="5">
    <location>
        <begin position="804"/>
        <end position="810"/>
    </location>
</feature>
<feature type="helix" evidence="5">
    <location>
        <begin position="821"/>
        <end position="827"/>
    </location>
</feature>
<feature type="strand" evidence="5">
    <location>
        <begin position="828"/>
        <end position="830"/>
    </location>
</feature>
<feature type="strand" evidence="5">
    <location>
        <begin position="838"/>
        <end position="848"/>
    </location>
</feature>
<feature type="strand" evidence="5">
    <location>
        <begin position="854"/>
        <end position="859"/>
    </location>
</feature>
<feature type="helix" evidence="5">
    <location>
        <begin position="860"/>
        <end position="862"/>
    </location>
</feature>
<feature type="strand" evidence="5">
    <location>
        <begin position="863"/>
        <end position="866"/>
    </location>
</feature>
<feature type="strand" evidence="5">
    <location>
        <begin position="869"/>
        <end position="872"/>
    </location>
</feature>
<feature type="helix" evidence="5">
    <location>
        <begin position="873"/>
        <end position="882"/>
    </location>
</feature>
<feature type="strand" evidence="5">
    <location>
        <begin position="883"/>
        <end position="885"/>
    </location>
</feature>
<feature type="strand" evidence="5">
    <location>
        <begin position="888"/>
        <end position="894"/>
    </location>
</feature>
<feature type="strand" evidence="5">
    <location>
        <begin position="897"/>
        <end position="899"/>
    </location>
</feature>
<feature type="strand" evidence="5">
    <location>
        <begin position="902"/>
        <end position="908"/>
    </location>
</feature>
<feature type="strand" evidence="5">
    <location>
        <begin position="910"/>
        <end position="913"/>
    </location>
</feature>
<feature type="helix" evidence="5">
    <location>
        <begin position="915"/>
        <end position="925"/>
    </location>
</feature>
<feature type="helix" evidence="5">
    <location>
        <begin position="928"/>
        <end position="930"/>
    </location>
</feature>
<feature type="strand" evidence="5">
    <location>
        <begin position="933"/>
        <end position="939"/>
    </location>
</feature>
<feature type="helix" evidence="5">
    <location>
        <begin position="959"/>
        <end position="962"/>
    </location>
</feature>
<feature type="helix" evidence="5">
    <location>
        <begin position="972"/>
        <end position="985"/>
    </location>
</feature>
<feature type="turn" evidence="5">
    <location>
        <begin position="996"/>
        <end position="1000"/>
    </location>
</feature>
<feature type="helix" evidence="5">
    <location>
        <begin position="1003"/>
        <end position="1012"/>
    </location>
</feature>
<feature type="strand" evidence="5">
    <location>
        <begin position="1013"/>
        <end position="1015"/>
    </location>
</feature>
<feature type="turn" evidence="5">
    <location>
        <begin position="1026"/>
        <end position="1028"/>
    </location>
</feature>
<feature type="helix" evidence="5">
    <location>
        <begin position="1032"/>
        <end position="1041"/>
    </location>
</feature>
<feature type="strand" evidence="5">
    <location>
        <begin position="1044"/>
        <end position="1046"/>
    </location>
</feature>
<feature type="turn" evidence="5">
    <location>
        <begin position="1047"/>
        <end position="1049"/>
    </location>
</feature>
<feature type="strand" evidence="4">
    <location>
        <begin position="1050"/>
        <end position="1054"/>
    </location>
</feature>
<feature type="strand" evidence="4">
    <location>
        <begin position="1058"/>
        <end position="1064"/>
    </location>
</feature>
<feature type="helix" evidence="4">
    <location>
        <begin position="1071"/>
        <end position="1074"/>
    </location>
</feature>
<feature type="helix" evidence="4">
    <location>
        <begin position="1075"/>
        <end position="1080"/>
    </location>
</feature>
<feature type="strand" evidence="4">
    <location>
        <begin position="1084"/>
        <end position="1089"/>
    </location>
</feature>
<feature type="helix" evidence="4">
    <location>
        <begin position="1097"/>
        <end position="1108"/>
    </location>
</feature>
<feature type="strand" evidence="4">
    <location>
        <begin position="1114"/>
        <end position="1119"/>
    </location>
</feature>
<feature type="helix" evidence="4">
    <location>
        <begin position="1121"/>
        <end position="1135"/>
    </location>
</feature>
<feature type="strand" evidence="4">
    <location>
        <begin position="1140"/>
        <end position="1147"/>
    </location>
</feature>
<feature type="helix" evidence="4">
    <location>
        <begin position="1166"/>
        <end position="1172"/>
    </location>
</feature>
<feature type="turn" evidence="4">
    <location>
        <begin position="1173"/>
        <end position="1175"/>
    </location>
</feature>
<feature type="helix" evidence="4">
    <location>
        <begin position="1178"/>
        <end position="1180"/>
    </location>
</feature>
<feature type="helix" evidence="4">
    <location>
        <begin position="1182"/>
        <end position="1201"/>
    </location>
</feature>
<feature type="strand" evidence="4">
    <location>
        <begin position="1208"/>
        <end position="1216"/>
    </location>
</feature>
<feature type="strand" evidence="5">
    <location>
        <begin position="1225"/>
        <end position="1228"/>
    </location>
</feature>
<feature type="helix" evidence="4">
    <location>
        <begin position="1231"/>
        <end position="1233"/>
    </location>
</feature>
<feature type="strand" evidence="4">
    <location>
        <begin position="1234"/>
        <end position="1236"/>
    </location>
</feature>
<feature type="strand" evidence="4">
    <location>
        <begin position="1238"/>
        <end position="1242"/>
    </location>
</feature>
<feature type="helix" evidence="4">
    <location>
        <begin position="1247"/>
        <end position="1249"/>
    </location>
</feature>
<feature type="helix" evidence="4">
    <location>
        <begin position="1253"/>
        <end position="1267"/>
    </location>
</feature>
<protein>
    <recommendedName>
        <fullName>Surfactin synthase subunit 3</fullName>
    </recommendedName>
</protein>
<organism>
    <name type="scientific">Bacillus subtilis (strain 168)</name>
    <dbReference type="NCBI Taxonomy" id="224308"/>
    <lineage>
        <taxon>Bacteria</taxon>
        <taxon>Bacillati</taxon>
        <taxon>Bacillota</taxon>
        <taxon>Bacilli</taxon>
        <taxon>Bacillales</taxon>
        <taxon>Bacillaceae</taxon>
        <taxon>Bacillus</taxon>
    </lineage>
</organism>
<gene>
    <name type="primary">srfAC</name>
    <name type="synonym">srfA3</name>
    <name type="ordered locus">BSU03510</name>
</gene>
<proteinExistence type="evidence at protein level"/>
<keyword id="KW-0002">3D-structure</keyword>
<keyword id="KW-0045">Antibiotic biosynthesis</keyword>
<keyword id="KW-0436">Ligase</keyword>
<keyword id="KW-0596">Phosphopantetheine</keyword>
<keyword id="KW-0597">Phosphoprotein</keyword>
<keyword id="KW-1185">Reference proteome</keyword>
<keyword id="KW-0749">Sporulation</keyword>
<name>SRFAC_BACSU</name>
<sequence>MSQFSKDQVQDMYYLSPMQEGMLFHAILNPGQSFYLEQITMKVKGSLNIKCLEESMNVIMDRYDVFRTVFIHEKVKRPVQVVLKKRQFHIEEIDLTHLTGSEQTAKINEYKEQDKIRGFDLTRDIPMRAAIFKKAEESFEWVWSYHHIILDGWCFGIVVQDLFKVYNALREQKPYSLPPVKPYKDYIKWLEKQDKQASLRYWREYLEGFEGQTTFAEQRKKQKDGYEPKELLFSLSEAETKAFTELAKSQHTTLSTALQAVWSVLISRYQQSGDLAFGTVVSGRPAEIKGVEHMVGLFINVVPRRVKLSEGITFNGLLKRLQEQSLQSEPHQYVPLYDIQSQADQPKLIDHIIVFENYPLQDAKNEESSENGFDMVDVHVFEKSNYDLNLMASPGDEMLIKLAYNENVFDEAFILRLKSQLLTAIQQLIQNPDQPVSTINLVDDREREFLLTGLNPPAQAHETKPLTYWFKEAVNANPDAPALTYSGQTLSYRELDEEANRIARRLQKHGAGKGSVVALYTKRSLELVIGILGVLKAGAAYLPVDPKLPEDRISYMLADSAAACLLTHQEMKEQAAELPYTGTTLFIDDQTRFEEQASDPATAIDPNDPAYIMYTSGTTGKPKGNITTHANIQGLVKHVDYMAFSDQDTFLSVSNYAFDAFTFDFYASMLNAARLIIADEHTLLDTERLTDLILQENVNVMFATTALFNLLTDAGEDWMKGLRCILFGGERASVPHVRKALRIMGPGKLINCYGPTEGTVFATAHVVHDLPDSISSLPIGKPISNASVYILNEQSQLQPFGAVGELCISGMGVSKGYVNRADLTKEKFIENPFKPGETLYRTGDLARWLPDGTIEYAGRIDDQVKIRGHRIELEEIEKQLQEYPGVKDAVVVADRHESGDASINAYLVNRTQLSAEDVKAHLKKQLPAYMVPQTFTFLDELPLTTNGKVNKRLLPKPDQDQLAEEWIGPRNEMEETIAQIWSEVLGRKQIGIHDDFFALGGHSLKAMTAASRIKKELGIDLPVKLLFEAPTIAGISAYLKNGGSDGLQDVTIMNQDQEQIIFAFPPVLGYGLMYQNLSSRLPSYKLCAFDFIEEEDRLDRYADLIQKLQPEGPLTLFGYSAGCSLAFEAAKKLEEQGRIVQRIIMVDSYKKQGVSDLDGRTVESDVEALMNVNRDNEALNSEAVKHGLKQKTHAFYSYYVNLISTGQVKADIDLLTSGADFDMPEWLASWEEATTGVYRVKRGFGTHAEMLQGETLDRNAEILLEFLNTQTVTVS</sequence>
<comment type="function">
    <text>Probably activates a leucine.</text>
</comment>
<comment type="cofactor">
    <cofactor>
        <name>pantetheine 4'-phosphate</name>
        <dbReference type="ChEBI" id="CHEBI:47942"/>
    </cofactor>
    <text>Binds 1 phosphopantetheine covalently.</text>
</comment>
<comment type="pathway">
    <text>Antibiotic biosynthesis; surfactin biosynthesis.</text>
</comment>
<comment type="similarity">
    <text evidence="3">Belongs to the ATP-dependent AMP-binding enzyme family.</text>
</comment>
<comment type="caution">
    <text evidence="3">The phosphoserine observed at Ser-1003 in PubMed:17218307 may result from the secondary neutral loss of pantetheine from the phosphodiester linked cofactor.</text>
</comment>
<evidence type="ECO:0000255" key="1">
    <source>
        <dbReference type="PROSITE-ProRule" id="PRU00258"/>
    </source>
</evidence>
<evidence type="ECO:0000269" key="2">
    <source>
    </source>
</evidence>
<evidence type="ECO:0000305" key="3"/>
<evidence type="ECO:0007829" key="4">
    <source>
        <dbReference type="PDB" id="1JMK"/>
    </source>
</evidence>
<evidence type="ECO:0007829" key="5">
    <source>
        <dbReference type="PDB" id="2VSQ"/>
    </source>
</evidence>
<evidence type="ECO:0007829" key="6">
    <source>
        <dbReference type="PDB" id="8F7I"/>
    </source>
</evidence>
<accession>Q08787</accession>